<organism>
    <name type="scientific">Dictyostelium discoideum</name>
    <name type="common">Social amoeba</name>
    <dbReference type="NCBI Taxonomy" id="44689"/>
    <lineage>
        <taxon>Eukaryota</taxon>
        <taxon>Amoebozoa</taxon>
        <taxon>Evosea</taxon>
        <taxon>Eumycetozoa</taxon>
        <taxon>Dictyostelia</taxon>
        <taxon>Dictyosteliales</taxon>
        <taxon>Dictyosteliaceae</taxon>
        <taxon>Dictyostelium</taxon>
    </lineage>
</organism>
<accession>Q54IK2</accession>
<reference key="1">
    <citation type="journal article" date="2005" name="Nature">
        <title>The genome of the social amoeba Dictyostelium discoideum.</title>
        <authorList>
            <person name="Eichinger L."/>
            <person name="Pachebat J.A."/>
            <person name="Gloeckner G."/>
            <person name="Rajandream M.A."/>
            <person name="Sucgang R."/>
            <person name="Berriman M."/>
            <person name="Song J."/>
            <person name="Olsen R."/>
            <person name="Szafranski K."/>
            <person name="Xu Q."/>
            <person name="Tunggal B."/>
            <person name="Kummerfeld S."/>
            <person name="Madera M."/>
            <person name="Konfortov B.A."/>
            <person name="Rivero F."/>
            <person name="Bankier A.T."/>
            <person name="Lehmann R."/>
            <person name="Hamlin N."/>
            <person name="Davies R."/>
            <person name="Gaudet P."/>
            <person name="Fey P."/>
            <person name="Pilcher K."/>
            <person name="Chen G."/>
            <person name="Saunders D."/>
            <person name="Sodergren E.J."/>
            <person name="Davis P."/>
            <person name="Kerhornou A."/>
            <person name="Nie X."/>
            <person name="Hall N."/>
            <person name="Anjard C."/>
            <person name="Hemphill L."/>
            <person name="Bason N."/>
            <person name="Farbrother P."/>
            <person name="Desany B."/>
            <person name="Just E."/>
            <person name="Morio T."/>
            <person name="Rost R."/>
            <person name="Churcher C.M."/>
            <person name="Cooper J."/>
            <person name="Haydock S."/>
            <person name="van Driessche N."/>
            <person name="Cronin A."/>
            <person name="Goodhead I."/>
            <person name="Muzny D.M."/>
            <person name="Mourier T."/>
            <person name="Pain A."/>
            <person name="Lu M."/>
            <person name="Harper D."/>
            <person name="Lindsay R."/>
            <person name="Hauser H."/>
            <person name="James K.D."/>
            <person name="Quiles M."/>
            <person name="Madan Babu M."/>
            <person name="Saito T."/>
            <person name="Buchrieser C."/>
            <person name="Wardroper A."/>
            <person name="Felder M."/>
            <person name="Thangavelu M."/>
            <person name="Johnson D."/>
            <person name="Knights A."/>
            <person name="Loulseged H."/>
            <person name="Mungall K.L."/>
            <person name="Oliver K."/>
            <person name="Price C."/>
            <person name="Quail M.A."/>
            <person name="Urushihara H."/>
            <person name="Hernandez J."/>
            <person name="Rabbinowitsch E."/>
            <person name="Steffen D."/>
            <person name="Sanders M."/>
            <person name="Ma J."/>
            <person name="Kohara Y."/>
            <person name="Sharp S."/>
            <person name="Simmonds M.N."/>
            <person name="Spiegler S."/>
            <person name="Tivey A."/>
            <person name="Sugano S."/>
            <person name="White B."/>
            <person name="Walker D."/>
            <person name="Woodward J.R."/>
            <person name="Winckler T."/>
            <person name="Tanaka Y."/>
            <person name="Shaulsky G."/>
            <person name="Schleicher M."/>
            <person name="Weinstock G.M."/>
            <person name="Rosenthal A."/>
            <person name="Cox E.C."/>
            <person name="Chisholm R.L."/>
            <person name="Gibbs R.A."/>
            <person name="Loomis W.F."/>
            <person name="Platzer M."/>
            <person name="Kay R.R."/>
            <person name="Williams J.G."/>
            <person name="Dear P.H."/>
            <person name="Noegel A.A."/>
            <person name="Barrell B.G."/>
            <person name="Kuspa A."/>
        </authorList>
    </citation>
    <scope>NUCLEOTIDE SEQUENCE [LARGE SCALE GENOMIC DNA]</scope>
    <source>
        <strain>AX4</strain>
    </source>
</reference>
<name>TM120_DICDI</name>
<sequence length="368" mass="42871">MMESFSETKSSIATNKSTTPTHEVQISKELQDIKNEVFELKKSHEQCKEKGIKVKKDINDVFKHADDITNTLAKHEKESSQLISRIKHLNAKEKQLDITKELSAHLDQIKVNVKRAKVSFTPETGSIFVRLFLGQVNVKHMRENEKFRLKQEYEKFKKKTNPQFILFVVLLLLYPQSSFVTTSWQIWLLYYYITLALRENILLVNGSSIKPWWIMHHYLSIAGSLTNLLFPLSESFSYFLPQVTYFSGCQGLVQILTNRYQQGRLYKLVAMGKANIIDVTGESEGWGNDPGWTPSALFLFPFLLFVQFFQLYNSFSFFAFAYQRSGYVEWQVFSCGFIFLCLGLGNLLTTLSVYYQKWKNFSKYNKEN</sequence>
<dbReference type="EMBL" id="AAFI02000120">
    <property type="protein sequence ID" value="EAL63081.1"/>
    <property type="molecule type" value="Genomic_DNA"/>
</dbReference>
<dbReference type="RefSeq" id="XP_636584.1">
    <property type="nucleotide sequence ID" value="XM_631492.1"/>
</dbReference>
<dbReference type="SMR" id="Q54IK2"/>
<dbReference type="FunCoup" id="Q54IK2">
    <property type="interactions" value="35"/>
</dbReference>
<dbReference type="GlyGen" id="Q54IK2">
    <property type="glycosylation" value="1 site"/>
</dbReference>
<dbReference type="PaxDb" id="44689-DDB0266365"/>
<dbReference type="EnsemblProtists" id="EAL63081">
    <property type="protein sequence ID" value="EAL63081"/>
    <property type="gene ID" value="DDB_G0288699"/>
</dbReference>
<dbReference type="GeneID" id="8626757"/>
<dbReference type="KEGG" id="ddi:DDB_G0288699"/>
<dbReference type="dictyBase" id="DDB_G0288699">
    <property type="gene designation" value="tmem120"/>
</dbReference>
<dbReference type="VEuPathDB" id="AmoebaDB:DDB_G0288699"/>
<dbReference type="eggNOG" id="KOG4758">
    <property type="taxonomic scope" value="Eukaryota"/>
</dbReference>
<dbReference type="HOGENOM" id="CLU_048749_1_1_1"/>
<dbReference type="InParanoid" id="Q54IK2"/>
<dbReference type="OMA" id="WPNTGPW"/>
<dbReference type="PhylomeDB" id="Q54IK2"/>
<dbReference type="PRO" id="PR:Q54IK2"/>
<dbReference type="Proteomes" id="UP000002195">
    <property type="component" value="Chromosome 5"/>
</dbReference>
<dbReference type="GO" id="GO:0016020">
    <property type="term" value="C:membrane"/>
    <property type="evidence" value="ECO:0000318"/>
    <property type="project" value="GO_Central"/>
</dbReference>
<dbReference type="InterPro" id="IPR012926">
    <property type="entry name" value="TMEM120A/B"/>
</dbReference>
<dbReference type="PANTHER" id="PTHR21433:SF0">
    <property type="entry name" value="TRANSMEMBRANE PROTEIN 120 HOMOLOG"/>
    <property type="match status" value="1"/>
</dbReference>
<dbReference type="PANTHER" id="PTHR21433">
    <property type="entry name" value="TRANSMEMBRANE PROTEIN INDUCED BY TUMOR NECROSIS FACTOR ALPHA"/>
    <property type="match status" value="1"/>
</dbReference>
<dbReference type="Pfam" id="PF07851">
    <property type="entry name" value="TMEM120A-B"/>
    <property type="match status" value="1"/>
</dbReference>
<feature type="chain" id="PRO_0000327733" description="Transmembrane protein 120 homolog">
    <location>
        <begin position="1"/>
        <end position="368"/>
    </location>
</feature>
<feature type="transmembrane region" description="Helical" evidence="1">
    <location>
        <begin position="164"/>
        <end position="184"/>
    </location>
</feature>
<feature type="transmembrane region" description="Helical" evidence="1">
    <location>
        <begin position="186"/>
        <end position="206"/>
    </location>
</feature>
<feature type="transmembrane region" description="Helical" evidence="1">
    <location>
        <begin position="212"/>
        <end position="232"/>
    </location>
</feature>
<feature type="transmembrane region" description="Helical" evidence="1">
    <location>
        <begin position="236"/>
        <end position="256"/>
    </location>
</feature>
<feature type="transmembrane region" description="Helical" evidence="1">
    <location>
        <begin position="291"/>
        <end position="311"/>
    </location>
</feature>
<feature type="transmembrane region" description="Helical" evidence="1">
    <location>
        <begin position="332"/>
        <end position="352"/>
    </location>
</feature>
<feature type="region of interest" description="Disordered" evidence="2">
    <location>
        <begin position="1"/>
        <end position="23"/>
    </location>
</feature>
<feature type="coiled-coil region" evidence="1">
    <location>
        <begin position="25"/>
        <end position="96"/>
    </location>
</feature>
<evidence type="ECO:0000255" key="1"/>
<evidence type="ECO:0000256" key="2">
    <source>
        <dbReference type="SAM" id="MobiDB-lite"/>
    </source>
</evidence>
<evidence type="ECO:0000305" key="3"/>
<keyword id="KW-0175">Coiled coil</keyword>
<keyword id="KW-0472">Membrane</keyword>
<keyword id="KW-1185">Reference proteome</keyword>
<keyword id="KW-0812">Transmembrane</keyword>
<keyword id="KW-1133">Transmembrane helix</keyword>
<proteinExistence type="inferred from homology"/>
<gene>
    <name type="primary">tmem120</name>
    <name type="ORF">DDB_G0288699</name>
</gene>
<protein>
    <recommendedName>
        <fullName>Transmembrane protein 120 homolog</fullName>
    </recommendedName>
</protein>
<comment type="subcellular location">
    <subcellularLocation>
        <location evidence="3">Membrane</location>
        <topology evidence="3">Multi-pass membrane protein</topology>
    </subcellularLocation>
</comment>
<comment type="similarity">
    <text evidence="3">Belongs to the TMEM120 family.</text>
</comment>